<accession>Q9FJD4</accession>
<accession>Q8GZ46</accession>
<name>IMB1_ARATH</name>
<feature type="initiator methionine" description="Removed" evidence="8">
    <location>
        <position position="1"/>
    </location>
</feature>
<feature type="chain" id="PRO_0000431576" description="Importin subunit beta-1">
    <location>
        <begin position="2"/>
        <end position="870"/>
    </location>
</feature>
<feature type="repeat" description="HEAT 1" evidence="1">
    <location>
        <begin position="4"/>
        <end position="33"/>
    </location>
</feature>
<feature type="domain" description="Importin N-terminal" evidence="2">
    <location>
        <begin position="23"/>
        <end position="103"/>
    </location>
</feature>
<feature type="repeat" description="HEAT 2" evidence="1">
    <location>
        <begin position="35"/>
        <end position="67"/>
    </location>
</feature>
<feature type="repeat" description="HEAT 3" evidence="1">
    <location>
        <begin position="87"/>
        <end position="126"/>
    </location>
</feature>
<feature type="repeat" description="HEAT 4" evidence="1">
    <location>
        <begin position="132"/>
        <end position="161"/>
    </location>
</feature>
<feature type="repeat" description="HEAT 5" evidence="1">
    <location>
        <begin position="172"/>
        <end position="204"/>
    </location>
</feature>
<feature type="repeat" description="HEAT 6" evidence="1">
    <location>
        <begin position="214"/>
        <end position="249"/>
    </location>
</feature>
<feature type="repeat" description="HEAT 7" evidence="1">
    <location>
        <begin position="255"/>
        <end position="304"/>
    </location>
</feature>
<feature type="repeat" description="HEAT 8" evidence="1">
    <location>
        <begin position="313"/>
        <end position="361"/>
    </location>
</feature>
<feature type="repeat" description="HEAT 9" evidence="1">
    <location>
        <begin position="365"/>
        <end position="395"/>
    </location>
</feature>
<feature type="repeat" description="HEAT 10" evidence="1">
    <location>
        <begin position="403"/>
        <end position="440"/>
    </location>
</feature>
<feature type="repeat" description="HEAT 11" evidence="1">
    <location>
        <begin position="456"/>
        <end position="492"/>
    </location>
</feature>
<feature type="repeat" description="HEAT 12" evidence="1">
    <location>
        <begin position="498"/>
        <end position="535"/>
    </location>
</feature>
<feature type="repeat" description="HEAT 13" evidence="1">
    <location>
        <begin position="542"/>
        <end position="588"/>
    </location>
</feature>
<feature type="repeat" description="HEAT 14" evidence="1">
    <location>
        <begin position="596"/>
        <end position="637"/>
    </location>
</feature>
<feature type="repeat" description="HEAT 15" evidence="1">
    <location>
        <begin position="642"/>
        <end position="679"/>
    </location>
</feature>
<feature type="repeat" description="HEAT 16" evidence="1">
    <location>
        <begin position="684"/>
        <end position="722"/>
    </location>
</feature>
<feature type="repeat" description="HEAT 17" evidence="1">
    <location>
        <begin position="730"/>
        <end position="776"/>
    </location>
</feature>
<feature type="repeat" description="HEAT 19" evidence="1">
    <location>
        <begin position="826"/>
        <end position="868"/>
    </location>
</feature>
<feature type="modified residue" description="N-acetylalanine" evidence="8">
    <location>
        <position position="2"/>
    </location>
</feature>
<proteinExistence type="evidence at protein level"/>
<keyword id="KW-0007">Acetylation</keyword>
<keyword id="KW-0963">Cytoplasm</keyword>
<keyword id="KW-0539">Nucleus</keyword>
<keyword id="KW-0653">Protein transport</keyword>
<keyword id="KW-1185">Reference proteome</keyword>
<keyword id="KW-0677">Repeat</keyword>
<keyword id="KW-0346">Stress response</keyword>
<keyword id="KW-0813">Transport</keyword>
<reference key="1">
    <citation type="journal article" date="1998" name="DNA Res.">
        <title>Structural analysis of Arabidopsis thaliana chromosome 5. VII. Sequence features of the regions of 1,013,767 bp covered by sixteen physically assigned P1 and TAC clones.</title>
        <authorList>
            <person name="Nakamura Y."/>
            <person name="Sato S."/>
            <person name="Asamizu E."/>
            <person name="Kaneko T."/>
            <person name="Kotani H."/>
            <person name="Miyajima N."/>
            <person name="Tabata S."/>
        </authorList>
    </citation>
    <scope>NUCLEOTIDE SEQUENCE [LARGE SCALE GENOMIC DNA]</scope>
    <source>
        <strain>cv. Columbia</strain>
    </source>
</reference>
<reference key="2">
    <citation type="journal article" date="2017" name="Plant J.">
        <title>Araport11: a complete reannotation of the Arabidopsis thaliana reference genome.</title>
        <authorList>
            <person name="Cheng C.Y."/>
            <person name="Krishnakumar V."/>
            <person name="Chan A.P."/>
            <person name="Thibaud-Nissen F."/>
            <person name="Schobel S."/>
            <person name="Town C.D."/>
        </authorList>
    </citation>
    <scope>GENOME REANNOTATION</scope>
    <source>
        <strain>cv. Columbia</strain>
    </source>
</reference>
<reference key="3">
    <citation type="journal article" date="2002" name="Science">
        <title>Functional annotation of a full-length Arabidopsis cDNA collection.</title>
        <authorList>
            <person name="Seki M."/>
            <person name="Narusaka M."/>
            <person name="Kamiya A."/>
            <person name="Ishida J."/>
            <person name="Satou M."/>
            <person name="Sakurai T."/>
            <person name="Nakajima M."/>
            <person name="Enju A."/>
            <person name="Akiyama K."/>
            <person name="Oono Y."/>
            <person name="Muramatsu M."/>
            <person name="Hayashizaki Y."/>
            <person name="Kawai J."/>
            <person name="Carninci P."/>
            <person name="Itoh M."/>
            <person name="Ishii Y."/>
            <person name="Arakawa T."/>
            <person name="Shibata K."/>
            <person name="Shinagawa A."/>
            <person name="Shinozaki K."/>
        </authorList>
    </citation>
    <scope>NUCLEOTIDE SEQUENCE [LARGE SCALE MRNA]</scope>
    <source>
        <strain>cv. Columbia</strain>
    </source>
</reference>
<reference key="4">
    <citation type="journal article" date="2012" name="Mol. Cell. Proteomics">
        <title>Comparative large-scale characterisation of plant vs. mammal proteins reveals similar and idiosyncratic N-alpha acetylation features.</title>
        <authorList>
            <person name="Bienvenut W.V."/>
            <person name="Sumpton D."/>
            <person name="Martinez A."/>
            <person name="Lilla S."/>
            <person name="Espagne C."/>
            <person name="Meinnel T."/>
            <person name="Giglione C."/>
        </authorList>
    </citation>
    <scope>ACETYLATION [LARGE SCALE ANALYSIS] AT ALA-2</scope>
    <scope>CLEAVAGE OF INITIATOR METHIONINE [LARGE SCALE ANALYSIS]</scope>
    <scope>IDENTIFICATION BY MASS SPECTROMETRY [LARGE SCALE ANALYSIS]</scope>
</reference>
<reference key="5">
    <citation type="journal article" date="2013" name="Plant J.">
        <title>An Arabidopsis homolog of importin beta1 is required for ABA response and drought tolerance.</title>
        <authorList>
            <person name="Luo Y."/>
            <person name="Wang Z."/>
            <person name="Ji H."/>
            <person name="Fang H."/>
            <person name="Wang S."/>
            <person name="Tian L."/>
            <person name="Li X."/>
        </authorList>
    </citation>
    <scope>FUNCTION</scope>
    <scope>INTERACTION WITH IMPA1; IMPA2; NUP62; RAN1; RAN2 AND RAN3</scope>
    <scope>SUBCELLULAR LOCATION</scope>
    <scope>TISSUE SPECIFICITY</scope>
    <scope>DISRUPTION PHENOTYPE</scope>
</reference>
<comment type="function">
    <text evidence="3">Acts as a negative effector of drought tolerance. Involved in the regulation of stomatal closure and in the abscisic acid (ABA)-mediated pathway that lead to drought tolerance. Does not directly mediate nuclear import of ABI1 and ABI2 which are key regulators of the ABA signaling pathway. May be involved in nuclear translocation of other type 2C protein phosphatases that mediate ABA signaling.</text>
</comment>
<comment type="subunit">
    <text evidence="3">Forms a complex with the importin subunits alpha IMPA1 or IMPA2, the nucleoporin NUP62 and the Ran-GTP-binding proteins RAN1, RAN2 or RAN3.</text>
</comment>
<comment type="subcellular location">
    <subcellularLocation>
        <location evidence="3">Cytoplasm</location>
    </subcellularLocation>
    <subcellularLocation>
        <location evidence="3">Nucleus</location>
    </subcellularLocation>
</comment>
<comment type="tissue specificity">
    <text evidence="3">Expressed in roots, cotyledons, leaves, stems, petals, stamen, stigma, siliques, embryos and guard cells.</text>
</comment>
<comment type="disruption phenotype">
    <text evidence="3">Delayed development and flowering, reduced length of leaves, stems and siliques, increased sensitivity to abscisic acid (ABA) and increased drought tolerance.</text>
</comment>
<comment type="similarity">
    <text evidence="5">Belongs to the importin beta family. Importin beta-1 subfamily.</text>
</comment>
<comment type="sequence caution" evidence="5">
    <conflict type="frameshift">
        <sequence resource="EMBL-CDS" id="BAC41893"/>
    </conflict>
</comment>
<sequence length="870" mass="96259">MAMEVTQLLINAQSIDGTVRKHAEESLKQFQEQNLAGFLLSLAGELANDEKPVDSRKLAGLVLKNALDAKEQHRKYELVQRWLALDMSTKSQIRAFLLKTLSAPVPDVRSTASQVIAKVAGIELPQKQWPELIVSLLSNIHQLPAHVKQATLETLGYLCEEVSPDVVEQEHVNKILTAVVQGMNAAEGNTDVRLAATRALYMALGFAQANFNNDMERDYIMRVVCEATLSPEVKIRQAAFECLVSIASTYYEKLAHYMQDIFNITAKAVREDDESVALQAIEFWSSICDEEIDILEEYGGEFAGDSDVPCFYFTKQALPGLVPLLLETLLKQEEDQDLDEGAWNIAMAGGTCLGLVARAVGDDIVPHVMPFIEEKISKPDWREREAATYAFGSILEGPSADKLMAIVNAALTFMLNALTNDPSNHVKDTTAWTLGRIFEFLHGSTIETPIINQANCQQIITVLIQSMNDAPNVAEKACGALYFLAQGYEDIGPSSPLTPFFQEIIKSLLAVAHREDATESRLRTAAYEALNEVVRCSTDETSTMVLQLVPVIMMELHNTLEGEKLSLDEREKQNELQGLLCGCLQVIIQKLGSEPTKSKFMEYADQMMGLFLRVFGCRSATAHEEAMLAIGALAYAAGPNFAKYMPEFYKYLEMGLQNFEEYQVCAVTVGVVGDVCRALEDKILPYCDGIMTQLLKDLSSNQLHRSVKPPIFSCFGDIALAIGEDFDKYWRYSMPMLQSAAELSAHSAGADDEMTEYTNSLRNGILEAYSGIFQGFKNSAKTQLLIPFAPHILQFLDSIYMEKDMDEVVMKTAIGVLGDLADTLGSHVGGLIQQSVSSKEFLNECLSSEDHTIKEAAEWAKHAITRAISV</sequence>
<protein>
    <recommendedName>
        <fullName evidence="5">Importin subunit beta-1</fullName>
    </recommendedName>
    <alternativeName>
        <fullName>Karyopherin subunit beta-1</fullName>
        <shortName evidence="4">ATKPNB1</shortName>
    </alternativeName>
</protein>
<evidence type="ECO:0000250" key="1">
    <source>
        <dbReference type="UniProtKB" id="Q14974"/>
    </source>
</evidence>
<evidence type="ECO:0000255" key="2">
    <source>
        <dbReference type="PROSITE-ProRule" id="PRU00115"/>
    </source>
</evidence>
<evidence type="ECO:0000269" key="3">
    <source>
    </source>
</evidence>
<evidence type="ECO:0000303" key="4">
    <source>
    </source>
</evidence>
<evidence type="ECO:0000305" key="5"/>
<evidence type="ECO:0000312" key="6">
    <source>
        <dbReference type="Araport" id="AT5G53480"/>
    </source>
</evidence>
<evidence type="ECO:0000312" key="7">
    <source>
        <dbReference type="EMBL" id="BAB09724.1"/>
    </source>
</evidence>
<evidence type="ECO:0007744" key="8">
    <source>
    </source>
</evidence>
<dbReference type="EMBL" id="AB015476">
    <property type="protein sequence ID" value="BAB09724.1"/>
    <property type="molecule type" value="Genomic_DNA"/>
</dbReference>
<dbReference type="EMBL" id="CP002688">
    <property type="protein sequence ID" value="AED96362.1"/>
    <property type="molecule type" value="Genomic_DNA"/>
</dbReference>
<dbReference type="EMBL" id="AK117217">
    <property type="protein sequence ID" value="BAC41893.1"/>
    <property type="status" value="ALT_FRAME"/>
    <property type="molecule type" value="mRNA"/>
</dbReference>
<dbReference type="RefSeq" id="NP_200160.1">
    <property type="nucleotide sequence ID" value="NM_124727.3"/>
</dbReference>
<dbReference type="SMR" id="Q9FJD4"/>
<dbReference type="FunCoup" id="Q9FJD4">
    <property type="interactions" value="4826"/>
</dbReference>
<dbReference type="STRING" id="3702.Q9FJD4"/>
<dbReference type="GlyGen" id="Q9FJD4">
    <property type="glycosylation" value="1 site"/>
</dbReference>
<dbReference type="iPTMnet" id="Q9FJD4"/>
<dbReference type="SwissPalm" id="Q9FJD4"/>
<dbReference type="PaxDb" id="3702-AT5G53480.1"/>
<dbReference type="ProMEX" id="Q9FJD4"/>
<dbReference type="ProteomicsDB" id="248544"/>
<dbReference type="EnsemblPlants" id="AT5G53480.1">
    <property type="protein sequence ID" value="AT5G53480.1"/>
    <property type="gene ID" value="AT5G53480"/>
</dbReference>
<dbReference type="GeneID" id="835429"/>
<dbReference type="Gramene" id="AT5G53480.1">
    <property type="protein sequence ID" value="AT5G53480.1"/>
    <property type="gene ID" value="AT5G53480"/>
</dbReference>
<dbReference type="KEGG" id="ath:AT5G53480"/>
<dbReference type="Araport" id="AT5G53480"/>
<dbReference type="TAIR" id="AT5G53480">
    <property type="gene designation" value="KPNB1"/>
</dbReference>
<dbReference type="eggNOG" id="KOG1241">
    <property type="taxonomic scope" value="Eukaryota"/>
</dbReference>
<dbReference type="HOGENOM" id="CLU_008296_0_0_1"/>
<dbReference type="InParanoid" id="Q9FJD4"/>
<dbReference type="OMA" id="QQYQERW"/>
<dbReference type="OrthoDB" id="10263328at2759"/>
<dbReference type="PhylomeDB" id="Q9FJD4"/>
<dbReference type="CD-CODE" id="4299E36E">
    <property type="entry name" value="Nucleolus"/>
</dbReference>
<dbReference type="PRO" id="PR:Q9FJD4"/>
<dbReference type="Proteomes" id="UP000006548">
    <property type="component" value="Chromosome 5"/>
</dbReference>
<dbReference type="ExpressionAtlas" id="Q9FJD4">
    <property type="expression patterns" value="baseline and differential"/>
</dbReference>
<dbReference type="GO" id="GO:0005737">
    <property type="term" value="C:cytoplasm"/>
    <property type="evidence" value="ECO:0000314"/>
    <property type="project" value="TAIR"/>
</dbReference>
<dbReference type="GO" id="GO:0005634">
    <property type="term" value="C:nucleus"/>
    <property type="evidence" value="ECO:0000314"/>
    <property type="project" value="TAIR"/>
</dbReference>
<dbReference type="GO" id="GO:0031267">
    <property type="term" value="F:small GTPase binding"/>
    <property type="evidence" value="ECO:0007669"/>
    <property type="project" value="InterPro"/>
</dbReference>
<dbReference type="GO" id="GO:0006606">
    <property type="term" value="P:protein import into nucleus"/>
    <property type="evidence" value="ECO:0000314"/>
    <property type="project" value="TAIR"/>
</dbReference>
<dbReference type="FunFam" id="1.25.10.10:FF:000027">
    <property type="entry name" value="Importin subunit beta-1"/>
    <property type="match status" value="1"/>
</dbReference>
<dbReference type="Gene3D" id="1.25.10.10">
    <property type="entry name" value="Leucine-rich Repeat Variant"/>
    <property type="match status" value="1"/>
</dbReference>
<dbReference type="InterPro" id="IPR011989">
    <property type="entry name" value="ARM-like"/>
</dbReference>
<dbReference type="InterPro" id="IPR016024">
    <property type="entry name" value="ARM-type_fold"/>
</dbReference>
<dbReference type="InterPro" id="IPR001494">
    <property type="entry name" value="Importin-beta_N"/>
</dbReference>
<dbReference type="InterPro" id="IPR040122">
    <property type="entry name" value="Importin_beta"/>
</dbReference>
<dbReference type="PANTHER" id="PTHR10527">
    <property type="entry name" value="IMPORTIN BETA"/>
    <property type="match status" value="1"/>
</dbReference>
<dbReference type="Pfam" id="PF13513">
    <property type="entry name" value="HEAT_EZ"/>
    <property type="match status" value="1"/>
</dbReference>
<dbReference type="Pfam" id="PF03810">
    <property type="entry name" value="IBN_N"/>
    <property type="match status" value="1"/>
</dbReference>
<dbReference type="SMART" id="SM00913">
    <property type="entry name" value="IBN_N"/>
    <property type="match status" value="1"/>
</dbReference>
<dbReference type="SUPFAM" id="SSF48371">
    <property type="entry name" value="ARM repeat"/>
    <property type="match status" value="1"/>
</dbReference>
<dbReference type="PROSITE" id="PS50166">
    <property type="entry name" value="IMPORTIN_B_NT"/>
    <property type="match status" value="1"/>
</dbReference>
<organism>
    <name type="scientific">Arabidopsis thaliana</name>
    <name type="common">Mouse-ear cress</name>
    <dbReference type="NCBI Taxonomy" id="3702"/>
    <lineage>
        <taxon>Eukaryota</taxon>
        <taxon>Viridiplantae</taxon>
        <taxon>Streptophyta</taxon>
        <taxon>Embryophyta</taxon>
        <taxon>Tracheophyta</taxon>
        <taxon>Spermatophyta</taxon>
        <taxon>Magnoliopsida</taxon>
        <taxon>eudicotyledons</taxon>
        <taxon>Gunneridae</taxon>
        <taxon>Pentapetalae</taxon>
        <taxon>rosids</taxon>
        <taxon>malvids</taxon>
        <taxon>Brassicales</taxon>
        <taxon>Brassicaceae</taxon>
        <taxon>Camelineae</taxon>
        <taxon>Arabidopsis</taxon>
    </lineage>
</organism>
<gene>
    <name evidence="4" type="primary">KPNB1</name>
    <name evidence="6" type="ordered locus">At5g53480</name>
    <name evidence="7" type="ORF">MNC6.1</name>
</gene>